<comment type="function">
    <text>Probable transporter.</text>
</comment>
<comment type="subcellular location">
    <subcellularLocation>
        <location evidence="4">Golgi apparatus</location>
        <location evidence="4">cis-Golgi network membrane</location>
        <topology evidence="4">Multi-pass membrane protein</topology>
    </subcellularLocation>
</comment>
<comment type="miscellaneous">
    <text evidence="2">Present with 414 molecules/cell in log phase SD medium.</text>
</comment>
<comment type="similarity">
    <text evidence="3">Belongs to the major facilitator superfamily.</text>
</comment>
<protein>
    <recommendedName>
        <fullName>Bypass of stop codon protein 6</fullName>
    </recommendedName>
</protein>
<sequence>MDASSVPPKVDDYGMYTTEISHHNPIELKNLLSSSDSRRNSQDEDSLPNNTNLIKEIDWQGEKVKTYPLNYQTVPLVKLQVIACLIMFVVFGMNDQTVGALLPTLIEYYHISRVDVSNVFIVQLCGYVMASLSKERLNKHFGMRGGMLLAAGLCIVFLIILATAPSSFYVCMFCGLPLGLGIGILDSTGNVLMGSLLVHKNELMGIMHGLYGAAAMVTPPLVSYFVEWGHWSLFFLIPLFFSIIGMIVIFPAFKFETASKYDYLCSVENKESNNDVEEAGDNSLMESTKASPGFFELLRNPAIFLYSLYLFLYLGAEITTGSWFFSYLLETKSSNKVAMSYIAASFWTGLTVGRLCLGFVTERFFENEYKASKAYAFLTLSSYTLFVLVGLINSSSVFYFVVLFFVVFCCGTFIGPLFPNASIVALQVLPKRLHVSGVGVAVAVGGCGGAAIPYLAGVIAHTVGIQYIPLLCWIMVALFTLEWTLYPKFIKGHEEYF</sequence>
<feature type="chain" id="PRO_0000084864" description="Bypass of stop codon protein 6">
    <location>
        <begin position="1"/>
        <end position="497"/>
    </location>
</feature>
<feature type="topological domain" description="Lumenal" evidence="1">
    <location>
        <begin position="1"/>
        <end position="72"/>
    </location>
</feature>
<feature type="transmembrane region" description="Helical" evidence="1">
    <location>
        <begin position="73"/>
        <end position="93"/>
    </location>
</feature>
<feature type="topological domain" description="Cytoplasmic" evidence="1">
    <location>
        <begin position="94"/>
        <end position="144"/>
    </location>
</feature>
<feature type="transmembrane region" description="Helical" evidence="1">
    <location>
        <begin position="145"/>
        <end position="165"/>
    </location>
</feature>
<feature type="topological domain" description="Lumenal" evidence="1">
    <location>
        <begin position="166"/>
        <end position="167"/>
    </location>
</feature>
<feature type="transmembrane region" description="Helical" evidence="1">
    <location>
        <begin position="168"/>
        <end position="188"/>
    </location>
</feature>
<feature type="topological domain" description="Cytoplasmic" evidence="1">
    <location>
        <begin position="189"/>
        <end position="205"/>
    </location>
</feature>
<feature type="transmembrane region" description="Helical" evidence="1">
    <location>
        <begin position="206"/>
        <end position="226"/>
    </location>
</feature>
<feature type="topological domain" description="Lumenal" evidence="1">
    <location>
        <begin position="227"/>
        <end position="232"/>
    </location>
</feature>
<feature type="transmembrane region" description="Helical" evidence="1">
    <location>
        <begin position="233"/>
        <end position="253"/>
    </location>
</feature>
<feature type="topological domain" description="Cytoplasmic" evidence="1">
    <location>
        <begin position="254"/>
        <end position="300"/>
    </location>
</feature>
<feature type="transmembrane region" description="Helical" evidence="1">
    <location>
        <begin position="301"/>
        <end position="321"/>
    </location>
</feature>
<feature type="topological domain" description="Lumenal" evidence="1">
    <location>
        <begin position="322"/>
        <end position="340"/>
    </location>
</feature>
<feature type="transmembrane region" description="Helical" evidence="1">
    <location>
        <begin position="341"/>
        <end position="361"/>
    </location>
</feature>
<feature type="topological domain" description="Cytoplasmic" evidence="1">
    <location>
        <begin position="362"/>
        <end position="373"/>
    </location>
</feature>
<feature type="transmembrane region" description="Helical" evidence="1">
    <location>
        <begin position="374"/>
        <end position="394"/>
    </location>
</feature>
<feature type="topological domain" description="Lumenal" evidence="1">
    <location>
        <begin position="395"/>
        <end position="397"/>
    </location>
</feature>
<feature type="transmembrane region" description="Helical" evidence="1">
    <location>
        <begin position="398"/>
        <end position="418"/>
    </location>
</feature>
<feature type="topological domain" description="Cytoplasmic" evidence="1">
    <location>
        <begin position="419"/>
        <end position="439"/>
    </location>
</feature>
<feature type="transmembrane region" description="Helical" evidence="1">
    <location>
        <begin position="440"/>
        <end position="460"/>
    </location>
</feature>
<feature type="topological domain" description="Lumenal" evidence="1">
    <location>
        <begin position="461"/>
        <end position="462"/>
    </location>
</feature>
<feature type="transmembrane region" description="Helical" evidence="1">
    <location>
        <begin position="463"/>
        <end position="483"/>
    </location>
</feature>
<feature type="topological domain" description="Cytoplasmic" evidence="1">
    <location>
        <begin position="484"/>
        <end position="497"/>
    </location>
</feature>
<feature type="modified residue" description="Phosphoserine" evidence="5 6">
    <location>
        <position position="37"/>
    </location>
</feature>
<feature type="modified residue" description="Phosphoserine" evidence="5 6 7">
    <location>
        <position position="41"/>
    </location>
</feature>
<feature type="glycosylation site" description="N-linked (GlcNAc...) asparagine" evidence="1">
    <location>
        <position position="49"/>
    </location>
</feature>
<feature type="sequence conflict" description="In Ref. 4; AAT92920." evidence="3" ref="4">
    <original>C</original>
    <variation>R</variation>
    <location>
        <position position="472"/>
    </location>
</feature>
<keyword id="KW-0325">Glycoprotein</keyword>
<keyword id="KW-0333">Golgi apparatus</keyword>
<keyword id="KW-0472">Membrane</keyword>
<keyword id="KW-0597">Phosphoprotein</keyword>
<keyword id="KW-1185">Reference proteome</keyword>
<keyword id="KW-0812">Transmembrane</keyword>
<keyword id="KW-1133">Transmembrane helix</keyword>
<keyword id="KW-0813">Transport</keyword>
<accession>Q08280</accession>
<accession>D6W1T2</accession>
<accession>Q6B229</accession>
<dbReference type="EMBL" id="X95465">
    <property type="protein sequence ID" value="CAA64736.1"/>
    <property type="molecule type" value="Genomic_DNA"/>
</dbReference>
<dbReference type="EMBL" id="Z74879">
    <property type="protein sequence ID" value="CAA99158.1"/>
    <property type="molecule type" value="Genomic_DNA"/>
</dbReference>
<dbReference type="EMBL" id="AY692901">
    <property type="protein sequence ID" value="AAT92920.1"/>
    <property type="molecule type" value="Genomic_DNA"/>
</dbReference>
<dbReference type="EMBL" id="BK006948">
    <property type="protein sequence ID" value="DAA10648.1"/>
    <property type="molecule type" value="Genomic_DNA"/>
</dbReference>
<dbReference type="PIR" id="S66834">
    <property type="entry name" value="S66834"/>
</dbReference>
<dbReference type="RefSeq" id="NP_014504.1">
    <property type="nucleotide sequence ID" value="NM_001183391.1"/>
</dbReference>
<dbReference type="SMR" id="Q08280"/>
<dbReference type="BioGRID" id="34239">
    <property type="interactions" value="80"/>
</dbReference>
<dbReference type="DIP" id="DIP-4683N"/>
<dbReference type="FunCoup" id="Q08280">
    <property type="interactions" value="35"/>
</dbReference>
<dbReference type="IntAct" id="Q08280">
    <property type="interactions" value="8"/>
</dbReference>
<dbReference type="MINT" id="Q08280"/>
<dbReference type="STRING" id="4932.YOL137W"/>
<dbReference type="TCDB" id="2.A.1.7.13">
    <property type="family name" value="the major facilitator superfamily (mfs)"/>
</dbReference>
<dbReference type="GlyCosmos" id="Q08280">
    <property type="glycosylation" value="1 site, No reported glycans"/>
</dbReference>
<dbReference type="GlyGen" id="Q08280">
    <property type="glycosylation" value="1 site"/>
</dbReference>
<dbReference type="iPTMnet" id="Q08280"/>
<dbReference type="PaxDb" id="4932-YOL137W"/>
<dbReference type="PeptideAtlas" id="Q08280"/>
<dbReference type="EnsemblFungi" id="YOL137W_mRNA">
    <property type="protein sequence ID" value="YOL137W"/>
    <property type="gene ID" value="YOL137W"/>
</dbReference>
<dbReference type="GeneID" id="853983"/>
<dbReference type="KEGG" id="sce:YOL137W"/>
<dbReference type="AGR" id="SGD:S000005497"/>
<dbReference type="SGD" id="S000005497">
    <property type="gene designation" value="BSC6"/>
</dbReference>
<dbReference type="VEuPathDB" id="FungiDB:YOL137W"/>
<dbReference type="eggNOG" id="ENOG502QQA7">
    <property type="taxonomic scope" value="Eukaryota"/>
</dbReference>
<dbReference type="HOGENOM" id="CLU_021993_0_2_1"/>
<dbReference type="InParanoid" id="Q08280"/>
<dbReference type="OMA" id="ALQLLYW"/>
<dbReference type="OrthoDB" id="413079at2759"/>
<dbReference type="BioCyc" id="YEAST:G3O-33530-MONOMER"/>
<dbReference type="BioGRID-ORCS" id="853983">
    <property type="hits" value="2 hits in 10 CRISPR screens"/>
</dbReference>
<dbReference type="PRO" id="PR:Q08280"/>
<dbReference type="Proteomes" id="UP000002311">
    <property type="component" value="Chromosome XV"/>
</dbReference>
<dbReference type="RNAct" id="Q08280">
    <property type="molecule type" value="protein"/>
</dbReference>
<dbReference type="GO" id="GO:0030136">
    <property type="term" value="C:clathrin-coated vesicle"/>
    <property type="evidence" value="ECO:0007005"/>
    <property type="project" value="SGD"/>
</dbReference>
<dbReference type="GO" id="GO:0030137">
    <property type="term" value="C:COPI-coated vesicle"/>
    <property type="evidence" value="ECO:0007005"/>
    <property type="project" value="SGD"/>
</dbReference>
<dbReference type="GO" id="GO:0005794">
    <property type="term" value="C:Golgi apparatus"/>
    <property type="evidence" value="ECO:0007669"/>
    <property type="project" value="UniProtKB-SubCell"/>
</dbReference>
<dbReference type="GO" id="GO:0016020">
    <property type="term" value="C:membrane"/>
    <property type="evidence" value="ECO:0000318"/>
    <property type="project" value="GO_Central"/>
</dbReference>
<dbReference type="GO" id="GO:0022857">
    <property type="term" value="F:transmembrane transporter activity"/>
    <property type="evidence" value="ECO:0007669"/>
    <property type="project" value="InterPro"/>
</dbReference>
<dbReference type="CDD" id="cd17333">
    <property type="entry name" value="MFS_FucP_MFSD4_like"/>
    <property type="match status" value="1"/>
</dbReference>
<dbReference type="FunFam" id="1.20.1250.20:FF:000546">
    <property type="entry name" value="BSC6p protein"/>
    <property type="match status" value="1"/>
</dbReference>
<dbReference type="FunFam" id="1.20.1250.20:FF:000585">
    <property type="entry name" value="BSC6p protein"/>
    <property type="match status" value="1"/>
</dbReference>
<dbReference type="Gene3D" id="1.20.1250.20">
    <property type="entry name" value="MFS general substrate transporter like domains"/>
    <property type="match status" value="2"/>
</dbReference>
<dbReference type="InterPro" id="IPR011701">
    <property type="entry name" value="MFS"/>
</dbReference>
<dbReference type="InterPro" id="IPR020846">
    <property type="entry name" value="MFS_dom"/>
</dbReference>
<dbReference type="InterPro" id="IPR036259">
    <property type="entry name" value="MFS_trans_sf"/>
</dbReference>
<dbReference type="InterPro" id="IPR051788">
    <property type="entry name" value="MFS_Transporter"/>
</dbReference>
<dbReference type="PANTHER" id="PTHR23514">
    <property type="entry name" value="BYPASS OF STOP CODON PROTEIN 6"/>
    <property type="match status" value="1"/>
</dbReference>
<dbReference type="PANTHER" id="PTHR23514:SF3">
    <property type="entry name" value="BYPASS OF STOP CODON PROTEIN 6"/>
    <property type="match status" value="1"/>
</dbReference>
<dbReference type="Pfam" id="PF07690">
    <property type="entry name" value="MFS_1"/>
    <property type="match status" value="1"/>
</dbReference>
<dbReference type="SUPFAM" id="SSF103473">
    <property type="entry name" value="MFS general substrate transporter"/>
    <property type="match status" value="1"/>
</dbReference>
<dbReference type="PROSITE" id="PS50850">
    <property type="entry name" value="MFS"/>
    <property type="match status" value="1"/>
</dbReference>
<proteinExistence type="evidence at protein level"/>
<evidence type="ECO:0000255" key="1"/>
<evidence type="ECO:0000269" key="2">
    <source>
    </source>
</evidence>
<evidence type="ECO:0000305" key="3"/>
<evidence type="ECO:0000305" key="4">
    <source>
    </source>
</evidence>
<evidence type="ECO:0007744" key="5">
    <source>
    </source>
</evidence>
<evidence type="ECO:0007744" key="6">
    <source>
    </source>
</evidence>
<evidence type="ECO:0007744" key="7">
    <source>
    </source>
</evidence>
<name>BSC6_YEAST</name>
<reference key="1">
    <citation type="journal article" date="1996" name="Yeast">
        <title>Sequence analysis of a 12 801 bp fragment of the left arm of yeast chromosome XV containing a putative 6-phosphofructo-2-kinase gene, a gene for a possible glycophospholipid-anchored surface protein and six other open reading frames.</title>
        <authorList>
            <person name="Aldea M."/>
            <person name="Piedrafita L."/>
            <person name="Casas C."/>
            <person name="Casamayor A."/>
            <person name="Khalid H."/>
            <person name="Balcells L."/>
            <person name="Arino J."/>
            <person name="Herrero E."/>
        </authorList>
    </citation>
    <scope>NUCLEOTIDE SEQUENCE [GENOMIC DNA]</scope>
    <source>
        <strain>ATCC 96604 / S288c / FY1679</strain>
    </source>
</reference>
<reference key="2">
    <citation type="journal article" date="1997" name="Nature">
        <title>The nucleotide sequence of Saccharomyces cerevisiae chromosome XV.</title>
        <authorList>
            <person name="Dujon B."/>
            <person name="Albermann K."/>
            <person name="Aldea M."/>
            <person name="Alexandraki D."/>
            <person name="Ansorge W."/>
            <person name="Arino J."/>
            <person name="Benes V."/>
            <person name="Bohn C."/>
            <person name="Bolotin-Fukuhara M."/>
            <person name="Bordonne R."/>
            <person name="Boyer J."/>
            <person name="Camasses A."/>
            <person name="Casamayor A."/>
            <person name="Casas C."/>
            <person name="Cheret G."/>
            <person name="Cziepluch C."/>
            <person name="Daignan-Fornier B."/>
            <person name="Dang V.-D."/>
            <person name="de Haan M."/>
            <person name="Delius H."/>
            <person name="Durand P."/>
            <person name="Fairhead C."/>
            <person name="Feldmann H."/>
            <person name="Gaillon L."/>
            <person name="Galisson F."/>
            <person name="Gamo F.-J."/>
            <person name="Gancedo C."/>
            <person name="Goffeau A."/>
            <person name="Goulding S.E."/>
            <person name="Grivell L.A."/>
            <person name="Habbig B."/>
            <person name="Hand N.J."/>
            <person name="Hani J."/>
            <person name="Hattenhorst U."/>
            <person name="Hebling U."/>
            <person name="Hernando Y."/>
            <person name="Herrero E."/>
            <person name="Heumann K."/>
            <person name="Hiesel R."/>
            <person name="Hilger F."/>
            <person name="Hofmann B."/>
            <person name="Hollenberg C.P."/>
            <person name="Hughes B."/>
            <person name="Jauniaux J.-C."/>
            <person name="Kalogeropoulos A."/>
            <person name="Katsoulou C."/>
            <person name="Kordes E."/>
            <person name="Lafuente M.J."/>
            <person name="Landt O."/>
            <person name="Louis E.J."/>
            <person name="Maarse A.C."/>
            <person name="Madania A."/>
            <person name="Mannhaupt G."/>
            <person name="Marck C."/>
            <person name="Martin R.P."/>
            <person name="Mewes H.-W."/>
            <person name="Michaux G."/>
            <person name="Paces V."/>
            <person name="Parle-McDermott A.G."/>
            <person name="Pearson B.M."/>
            <person name="Perrin A."/>
            <person name="Pettersson B."/>
            <person name="Poch O."/>
            <person name="Pohl T.M."/>
            <person name="Poirey R."/>
            <person name="Portetelle D."/>
            <person name="Pujol A."/>
            <person name="Purnelle B."/>
            <person name="Ramezani Rad M."/>
            <person name="Rechmann S."/>
            <person name="Schwager C."/>
            <person name="Schweizer M."/>
            <person name="Sor F."/>
            <person name="Sterky F."/>
            <person name="Tarassov I.A."/>
            <person name="Teodoru C."/>
            <person name="Tettelin H."/>
            <person name="Thierry A."/>
            <person name="Tobiasch E."/>
            <person name="Tzermia M."/>
            <person name="Uhlen M."/>
            <person name="Unseld M."/>
            <person name="Valens M."/>
            <person name="Vandenbol M."/>
            <person name="Vetter I."/>
            <person name="Vlcek C."/>
            <person name="Voet M."/>
            <person name="Volckaert G."/>
            <person name="Voss H."/>
            <person name="Wambutt R."/>
            <person name="Wedler H."/>
            <person name="Wiemann S."/>
            <person name="Winsor B."/>
            <person name="Wolfe K.H."/>
            <person name="Zollner A."/>
            <person name="Zumstein E."/>
            <person name="Kleine K."/>
        </authorList>
    </citation>
    <scope>NUCLEOTIDE SEQUENCE [LARGE SCALE GENOMIC DNA]</scope>
    <source>
        <strain>ATCC 204508 / S288c</strain>
    </source>
</reference>
<reference key="3">
    <citation type="journal article" date="2014" name="G3 (Bethesda)">
        <title>The reference genome sequence of Saccharomyces cerevisiae: Then and now.</title>
        <authorList>
            <person name="Engel S.R."/>
            <person name="Dietrich F.S."/>
            <person name="Fisk D.G."/>
            <person name="Binkley G."/>
            <person name="Balakrishnan R."/>
            <person name="Costanzo M.C."/>
            <person name="Dwight S.S."/>
            <person name="Hitz B.C."/>
            <person name="Karra K."/>
            <person name="Nash R.S."/>
            <person name="Weng S."/>
            <person name="Wong E.D."/>
            <person name="Lloyd P."/>
            <person name="Skrzypek M.S."/>
            <person name="Miyasato S.R."/>
            <person name="Simison M."/>
            <person name="Cherry J.M."/>
        </authorList>
    </citation>
    <scope>GENOME REANNOTATION</scope>
    <source>
        <strain>ATCC 204508 / S288c</strain>
    </source>
</reference>
<reference key="4">
    <citation type="journal article" date="2007" name="Genome Res.">
        <title>Approaching a complete repository of sequence-verified protein-encoding clones for Saccharomyces cerevisiae.</title>
        <authorList>
            <person name="Hu Y."/>
            <person name="Rolfs A."/>
            <person name="Bhullar B."/>
            <person name="Murthy T.V.S."/>
            <person name="Zhu C."/>
            <person name="Berger M.F."/>
            <person name="Camargo A.A."/>
            <person name="Kelley F."/>
            <person name="McCarron S."/>
            <person name="Jepson D."/>
            <person name="Richardson A."/>
            <person name="Raphael J."/>
            <person name="Moreira D."/>
            <person name="Taycher E."/>
            <person name="Zuo D."/>
            <person name="Mohr S."/>
            <person name="Kane M.F."/>
            <person name="Williamson J."/>
            <person name="Simpson A.J.G."/>
            <person name="Bulyk M.L."/>
            <person name="Harlow E."/>
            <person name="Marsischky G."/>
            <person name="Kolodner R.D."/>
            <person name="LaBaer J."/>
        </authorList>
    </citation>
    <scope>NUCLEOTIDE SEQUENCE [GENOMIC DNA]</scope>
    <source>
        <strain>ATCC 204508 / S288c</strain>
    </source>
</reference>
<reference key="5">
    <citation type="journal article" date="2003" name="Nucleic Acids Res.">
        <title>Identification of stop codon readthrough genes in Saccharomyces cerevisiae.</title>
        <authorList>
            <person name="Namy O."/>
            <person name="Duchateau-Nguyen G."/>
            <person name="Hatin I."/>
            <person name="Hermann-Le Denmat S."/>
            <person name="Termier M."/>
            <person name="Rousset J.-P."/>
        </authorList>
    </citation>
    <scope>GENE NAME</scope>
</reference>
<reference key="6">
    <citation type="journal article" date="2003" name="Nature">
        <title>Global analysis of protein localization in budding yeast.</title>
        <authorList>
            <person name="Huh W.-K."/>
            <person name="Falvo J.V."/>
            <person name="Gerke L.C."/>
            <person name="Carroll A.S."/>
            <person name="Howson R.W."/>
            <person name="Weissman J.S."/>
            <person name="O'Shea E.K."/>
        </authorList>
    </citation>
    <scope>SUBCELLULAR LOCATION [LARGE SCALE ANALYSIS]</scope>
</reference>
<reference key="7">
    <citation type="journal article" date="2003" name="Nature">
        <title>Global analysis of protein expression in yeast.</title>
        <authorList>
            <person name="Ghaemmaghami S."/>
            <person name="Huh W.-K."/>
            <person name="Bower K."/>
            <person name="Howson R.W."/>
            <person name="Belle A."/>
            <person name="Dephoure N."/>
            <person name="O'Shea E.K."/>
            <person name="Weissman J.S."/>
        </authorList>
    </citation>
    <scope>LEVEL OF PROTEIN EXPRESSION [LARGE SCALE ANALYSIS]</scope>
</reference>
<reference key="8">
    <citation type="journal article" date="2006" name="Proc. Natl. Acad. Sci. U.S.A.">
        <title>A global topology map of the Saccharomyces cerevisiae membrane proteome.</title>
        <authorList>
            <person name="Kim H."/>
            <person name="Melen K."/>
            <person name="Oesterberg M."/>
            <person name="von Heijne G."/>
        </authorList>
    </citation>
    <scope>TOPOLOGY [LARGE SCALE ANALYSIS]</scope>
    <source>
        <strain>ATCC 208353 / W303-1A</strain>
    </source>
</reference>
<reference key="9">
    <citation type="journal article" date="2007" name="J. Proteome Res.">
        <title>Large-scale phosphorylation analysis of alpha-factor-arrested Saccharomyces cerevisiae.</title>
        <authorList>
            <person name="Li X."/>
            <person name="Gerber S.A."/>
            <person name="Rudner A.D."/>
            <person name="Beausoleil S.A."/>
            <person name="Haas W."/>
            <person name="Villen J."/>
            <person name="Elias J.E."/>
            <person name="Gygi S.P."/>
        </authorList>
    </citation>
    <scope>PHOSPHORYLATION [LARGE SCALE ANALYSIS] AT SER-37 AND SER-41</scope>
    <scope>IDENTIFICATION BY MASS SPECTROMETRY [LARGE SCALE ANALYSIS]</scope>
    <source>
        <strain>ADR376</strain>
    </source>
</reference>
<reference key="10">
    <citation type="journal article" date="2008" name="Mol. Cell. Proteomics">
        <title>A multidimensional chromatography technology for in-depth phosphoproteome analysis.</title>
        <authorList>
            <person name="Albuquerque C.P."/>
            <person name="Smolka M.B."/>
            <person name="Payne S.H."/>
            <person name="Bafna V."/>
            <person name="Eng J."/>
            <person name="Zhou H."/>
        </authorList>
    </citation>
    <scope>PHOSPHORYLATION [LARGE SCALE ANALYSIS] AT SER-37 AND SER-41</scope>
    <scope>IDENTIFICATION BY MASS SPECTROMETRY [LARGE SCALE ANALYSIS]</scope>
</reference>
<reference key="11">
    <citation type="journal article" date="2009" name="Science">
        <title>Global analysis of Cdk1 substrate phosphorylation sites provides insights into evolution.</title>
        <authorList>
            <person name="Holt L.J."/>
            <person name="Tuch B.B."/>
            <person name="Villen J."/>
            <person name="Johnson A.D."/>
            <person name="Gygi S.P."/>
            <person name="Morgan D.O."/>
        </authorList>
    </citation>
    <scope>PHOSPHORYLATION [LARGE SCALE ANALYSIS] AT SER-41</scope>
    <scope>IDENTIFICATION BY MASS SPECTROMETRY [LARGE SCALE ANALYSIS]</scope>
</reference>
<gene>
    <name type="primary">BSC6</name>
    <name type="ordered locus">YOL137W</name>
</gene>
<organism>
    <name type="scientific">Saccharomyces cerevisiae (strain ATCC 204508 / S288c)</name>
    <name type="common">Baker's yeast</name>
    <dbReference type="NCBI Taxonomy" id="559292"/>
    <lineage>
        <taxon>Eukaryota</taxon>
        <taxon>Fungi</taxon>
        <taxon>Dikarya</taxon>
        <taxon>Ascomycota</taxon>
        <taxon>Saccharomycotina</taxon>
        <taxon>Saccharomycetes</taxon>
        <taxon>Saccharomycetales</taxon>
        <taxon>Saccharomycetaceae</taxon>
        <taxon>Saccharomyces</taxon>
    </lineage>
</organism>